<accession>O01965</accession>
<sequence>MSSDDEINMDDSDSSQGEIDDGCMSDDDGIVLESREQNSSDYKDNGEPDNEVLNHDSLEAEMKKTITDVQAVLQVKTGVCRILLHKYKWNKESLLERFYEHPDTTTFLIDAHVIPRRQERLPAGDAECDICCSLGELSGLSCNHRACTQCWKAYLTNKIANNAQSEIECMAPNCKLLIEDEKVMFYITDPTVIATYRKLIVASYVETNRLLKWCPGIDCGKAVRVSHWEPRLVVCSCGSRFCFSCGHDWHEPVNCRLLKLWLKKCNDDSETSNWINANTKECPKCMITIEKDGGCNHMTCKNTACRFEFCWMCLGPWEPHGSSWYSCNRFDDSAAKNARDAQEVSRANLQRYLFYYNRYMGHQQSLRLEGKLYATVKSKMEQMQTLSMSWIEVQFLRKAVDVLSECRRTLMFTYAFAFYLKRDNNAIIFESNQKDLEMETEQLSGFLERDLDNENLVTLKQKVQDKYRYVEHRRKVLLDHCSEGADQELWVFNE</sequence>
<evidence type="ECO:0000250" key="1">
    <source>
        <dbReference type="UniProtKB" id="Q9Y4X5"/>
    </source>
</evidence>
<evidence type="ECO:0000255" key="2">
    <source>
        <dbReference type="PROSITE-ProRule" id="PRU01221"/>
    </source>
</evidence>
<evidence type="ECO:0000256" key="3">
    <source>
        <dbReference type="SAM" id="MobiDB-lite"/>
    </source>
</evidence>
<evidence type="ECO:0000269" key="4">
    <source>
    </source>
</evidence>
<evidence type="ECO:0000269" key="5">
    <source>
    </source>
</evidence>
<evidence type="ECO:0000305" key="6"/>
<evidence type="ECO:0000312" key="7">
    <source>
        <dbReference type="Proteomes" id="UP000001940"/>
    </source>
</evidence>
<evidence type="ECO:0000312" key="8">
    <source>
        <dbReference type="WormBase" id="C27A12.8"/>
    </source>
</evidence>
<comment type="function">
    <text evidence="1 4 5">E3 ubiquitin-protein transferase, which catalyzes ubiquitination of target proteins together with ubiquitin-conjugating enzyme E2 ubc-18 (By similarity). Acts with ubc-18 to regulate pharyngeal development (PubMed:16457801, PubMed:19521497).</text>
</comment>
<comment type="catalytic activity">
    <reaction evidence="1">
        <text>[E2 ubiquitin-conjugating enzyme]-S-ubiquitinyl-L-cysteine + [acceptor protein]-L-lysine = [E2 ubiquitin-conjugating enzyme]-L-cysteine + [acceptor protein]-N(6)-ubiquitinyl-L-lysine.</text>
        <dbReference type="EC" id="2.3.2.31"/>
    </reaction>
</comment>
<comment type="activity regulation">
    <text evidence="1">Autoinhibited by the ariadne domain, which masks the second RING-type zinc finger that contains the active site and inhibits the E3 activity.</text>
</comment>
<comment type="subunit">
    <text evidence="4">Interacts with ubiquitin-conjugating enzyme E2 ubc-18.</text>
</comment>
<comment type="subcellular location">
    <subcellularLocation>
        <location evidence="4">Nucleus</location>
    </subcellularLocation>
    <subcellularLocation>
        <location evidence="4">Cytoplasm</location>
    </subcellularLocation>
</comment>
<comment type="developmental stage">
    <text evidence="4">Expression is dynamic during early embryonic development, with ubiquitous somatic expression occurring between the 50- and 200-cell stage (PubMed:16457801). By the late proliferative phase of embryogenesis, expression is reduced, but maintained at high levels in muscle precursors (PubMed:16457801). Later in embryogenesis, moderate expression occurs in the lateral ectoderm (PubMed:16457801). Pharyngeal expression is very low at both the comma and 1.5-fold embryonic stages (PubMed:16457801). Expression is highest in muscle and neuronal cells in larvae and adults, including many of the amphid neurons that are proximal to the posterior bulb of the pharynx (PubMed:16457801). Consistent expression in cells of the somatic gonad including distal tip, sheath, and spermathecal cells, as well as in vulval cells undergoing morphogenesis (PubMed:16457801). Neuronal expression in the midbody includes the CAN, HSN, and ALM cells; neurons of the ventral and dorsal cords; and a number of posterior deirid neurons (PubMed:16457801). Expressed in all pairs of coelomocytes (PubMed:16457801).</text>
</comment>
<comment type="domain">
    <text evidence="1">Members of the RBR family are atypical E3 ligases. They interact with an E2 conjugating enzyme and function like HECT-type E3 enzymes: they bind E2s via the first RING-type zinc finger, but require an obligate trans-thiolation step during the ubiquitin transfer, requiring a conserved active site Cys residue in the second RING-type zinc finger. The active site probably forms a thioester intermediate with ubiquitin taken from the active-site cysteine of the E2 before ultimately transferring it to a Lys residue on the substrate.</text>
</comment>
<comment type="disruption phenotype">
    <text evidence="4">RNAi-mediated knockdown on a pha-1 or on a lin-35;ubc-18 mutant background produces a high percentage of animals with the Pun (pharyngeal unattached) phenotype, whereby the pharynx fails to elongate and form an attachment to the anterior alimentary opening or buccal cavity.</text>
</comment>
<comment type="similarity">
    <text evidence="6">Belongs to the RBR family. Ariadne subfamily.</text>
</comment>
<keyword id="KW-0963">Cytoplasm</keyword>
<keyword id="KW-0479">Metal-binding</keyword>
<keyword id="KW-0539">Nucleus</keyword>
<keyword id="KW-1185">Reference proteome</keyword>
<keyword id="KW-0677">Repeat</keyword>
<keyword id="KW-0808">Transferase</keyword>
<keyword id="KW-0833">Ubl conjugation pathway</keyword>
<keyword id="KW-0862">Zinc</keyword>
<keyword id="KW-0863">Zinc-finger</keyword>
<proteinExistence type="evidence at protein level"/>
<feature type="chain" id="PRO_0000452644" description="E3 ubiquitin-protein ligase ari-1.1">
    <location>
        <begin position="1"/>
        <end position="494"/>
    </location>
</feature>
<feature type="zinc finger region" description="RING-type 1" evidence="2">
    <location>
        <begin position="128"/>
        <end position="174"/>
    </location>
</feature>
<feature type="zinc finger region" description="IBR-type" evidence="2">
    <location>
        <begin position="194"/>
        <end position="255"/>
    </location>
</feature>
<feature type="zinc finger region" description="RING-type 2; atypical" evidence="2">
    <location>
        <begin position="282"/>
        <end position="313"/>
    </location>
</feature>
<feature type="region of interest" description="Disordered" evidence="3">
    <location>
        <begin position="1"/>
        <end position="52"/>
    </location>
</feature>
<feature type="region of interest" description="TRIAD supradomain" evidence="2">
    <location>
        <begin position="124"/>
        <end position="331"/>
    </location>
</feature>
<feature type="region of interest" description="Ariadne domain" evidence="1">
    <location>
        <begin position="346"/>
        <end position="494"/>
    </location>
</feature>
<feature type="compositionally biased region" description="Acidic residues" evidence="3">
    <location>
        <begin position="1"/>
        <end position="30"/>
    </location>
</feature>
<feature type="compositionally biased region" description="Basic and acidic residues" evidence="3">
    <location>
        <begin position="33"/>
        <end position="52"/>
    </location>
</feature>
<feature type="active site" evidence="2">
    <location>
        <position position="295"/>
    </location>
</feature>
<feature type="binding site" evidence="2">
    <location>
        <position position="128"/>
    </location>
    <ligand>
        <name>Zn(2+)</name>
        <dbReference type="ChEBI" id="CHEBI:29105"/>
        <label>1</label>
    </ligand>
</feature>
<feature type="binding site" evidence="2">
    <location>
        <position position="131"/>
    </location>
    <ligand>
        <name>Zn(2+)</name>
        <dbReference type="ChEBI" id="CHEBI:29105"/>
        <label>1</label>
    </ligand>
</feature>
<feature type="binding site" evidence="2">
    <location>
        <position position="142"/>
    </location>
    <ligand>
        <name>Zn(2+)</name>
        <dbReference type="ChEBI" id="CHEBI:29105"/>
        <label>2</label>
    </ligand>
</feature>
<feature type="binding site" evidence="2">
    <location>
        <position position="144"/>
    </location>
    <ligand>
        <name>Zn(2+)</name>
        <dbReference type="ChEBI" id="CHEBI:29105"/>
        <label>2</label>
    </ligand>
</feature>
<feature type="binding site" evidence="2">
    <location>
        <position position="147"/>
    </location>
    <ligand>
        <name>Zn(2+)</name>
        <dbReference type="ChEBI" id="CHEBI:29105"/>
        <label>1</label>
    </ligand>
</feature>
<feature type="binding site" evidence="2">
    <location>
        <position position="150"/>
    </location>
    <ligand>
        <name>Zn(2+)</name>
        <dbReference type="ChEBI" id="CHEBI:29105"/>
        <label>1</label>
    </ligand>
</feature>
<feature type="binding site" evidence="2">
    <location>
        <position position="169"/>
    </location>
    <ligand>
        <name>Zn(2+)</name>
        <dbReference type="ChEBI" id="CHEBI:29105"/>
        <label>2</label>
    </ligand>
</feature>
<feature type="binding site" evidence="2">
    <location>
        <position position="174"/>
    </location>
    <ligand>
        <name>Zn(2+)</name>
        <dbReference type="ChEBI" id="CHEBI:29105"/>
        <label>2</label>
    </ligand>
</feature>
<feature type="binding site" evidence="2">
    <location>
        <position position="214"/>
    </location>
    <ligand>
        <name>Zn(2+)</name>
        <dbReference type="ChEBI" id="CHEBI:29105"/>
        <label>3</label>
    </ligand>
</feature>
<feature type="binding site" evidence="2">
    <location>
        <position position="219"/>
    </location>
    <ligand>
        <name>Zn(2+)</name>
        <dbReference type="ChEBI" id="CHEBI:29105"/>
        <label>3</label>
    </ligand>
</feature>
<feature type="binding site" evidence="2">
    <location>
        <position position="235"/>
    </location>
    <ligand>
        <name>Zn(2+)</name>
        <dbReference type="ChEBI" id="CHEBI:29105"/>
        <label>3</label>
    </ligand>
</feature>
<feature type="binding site" evidence="2">
    <location>
        <position position="237"/>
    </location>
    <ligand>
        <name>Zn(2+)</name>
        <dbReference type="ChEBI" id="CHEBI:29105"/>
        <label>3</label>
    </ligand>
</feature>
<feature type="binding site" evidence="2">
    <location>
        <position position="242"/>
    </location>
    <ligand>
        <name>Zn(2+)</name>
        <dbReference type="ChEBI" id="CHEBI:29105"/>
        <label>4</label>
    </ligand>
</feature>
<feature type="binding site" evidence="2">
    <location>
        <position position="245"/>
    </location>
    <ligand>
        <name>Zn(2+)</name>
        <dbReference type="ChEBI" id="CHEBI:29105"/>
        <label>4</label>
    </ligand>
</feature>
<feature type="binding site" evidence="2">
    <location>
        <position position="250"/>
    </location>
    <ligand>
        <name>Zn(2+)</name>
        <dbReference type="ChEBI" id="CHEBI:29105"/>
        <label>4</label>
    </ligand>
</feature>
<feature type="binding site" evidence="2">
    <location>
        <position position="255"/>
    </location>
    <ligand>
        <name>Zn(2+)</name>
        <dbReference type="ChEBI" id="CHEBI:29105"/>
        <label>4</label>
    </ligand>
</feature>
<feature type="binding site" evidence="2">
    <location>
        <position position="282"/>
    </location>
    <ligand>
        <name>Zn(2+)</name>
        <dbReference type="ChEBI" id="CHEBI:29105"/>
        <label>5</label>
    </ligand>
</feature>
<feature type="binding site" evidence="2">
    <location>
        <position position="285"/>
    </location>
    <ligand>
        <name>Zn(2+)</name>
        <dbReference type="ChEBI" id="CHEBI:29105"/>
        <label>5</label>
    </ligand>
</feature>
<feature type="binding site" evidence="2">
    <location>
        <position position="300"/>
    </location>
    <ligand>
        <name>Zn(2+)</name>
        <dbReference type="ChEBI" id="CHEBI:29105"/>
        <label>5</label>
    </ligand>
</feature>
<feature type="binding site" evidence="2">
    <location>
        <position position="305"/>
    </location>
    <ligand>
        <name>Zn(2+)</name>
        <dbReference type="ChEBI" id="CHEBI:29105"/>
        <label>5</label>
    </ligand>
</feature>
<feature type="binding site" evidence="2">
    <location>
        <position position="310"/>
    </location>
    <ligand>
        <name>Zn(2+)</name>
        <dbReference type="ChEBI" id="CHEBI:29105"/>
        <label>6</label>
    </ligand>
</feature>
<feature type="binding site" evidence="2">
    <location>
        <position position="313"/>
    </location>
    <ligand>
        <name>Zn(2+)</name>
        <dbReference type="ChEBI" id="CHEBI:29105"/>
        <label>6</label>
    </ligand>
</feature>
<feature type="binding site" evidence="2">
    <location>
        <position position="320"/>
    </location>
    <ligand>
        <name>Zn(2+)</name>
        <dbReference type="ChEBI" id="CHEBI:29105"/>
        <label>6</label>
    </ligand>
</feature>
<feature type="binding site" evidence="2">
    <location>
        <position position="327"/>
    </location>
    <ligand>
        <name>Zn(2+)</name>
        <dbReference type="ChEBI" id="CHEBI:29105"/>
        <label>6</label>
    </ligand>
</feature>
<name>ARI11_CAEEL</name>
<reference evidence="7" key="1">
    <citation type="journal article" date="1998" name="Science">
        <title>Genome sequence of the nematode C. elegans: a platform for investigating biology.</title>
        <authorList>
            <consortium name="The C. elegans sequencing consortium"/>
        </authorList>
    </citation>
    <scope>NUCLEOTIDE SEQUENCE [LARGE SCALE GENOMIC DNA]</scope>
    <source>
        <strain evidence="7">Bristol N2</strain>
    </source>
</reference>
<reference evidence="6" key="2">
    <citation type="journal article" date="2006" name="Dev. Biol.">
        <title>ARI-1, an RBR family ubiquitin-ligase, functions with UBC-18 to regulate pharyngeal development in C. elegans.</title>
        <authorList>
            <person name="Qiu X."/>
            <person name="Fay D.S."/>
        </authorList>
    </citation>
    <scope>FUNCTION</scope>
    <scope>INTERACTION WITH UBC-18</scope>
    <scope>SUBCELLULAR LOCATION</scope>
    <scope>DEVELOPMENTAL STAGE</scope>
    <scope>DISRUPTION PHENOTYPE</scope>
</reference>
<reference key="3">
    <citation type="journal article" date="2009" name="PLoS Genet.">
        <title>A mechanistic basis for the coordinated regulation of pharyngeal morphogenesis in Caenorhabditis elegans by LIN-35/Rb and UBC-18-ARI-1.</title>
        <authorList>
            <person name="Mani K."/>
            <person name="Fay D.S."/>
        </authorList>
    </citation>
    <scope>FUNCTION</scope>
</reference>
<protein>
    <recommendedName>
        <fullName evidence="6">E3 ubiquitin-protein ligase ari-1.1</fullName>
        <ecNumber evidence="1">2.3.2.31</ecNumber>
    </recommendedName>
</protein>
<organism evidence="7">
    <name type="scientific">Caenorhabditis elegans</name>
    <dbReference type="NCBI Taxonomy" id="6239"/>
    <lineage>
        <taxon>Eukaryota</taxon>
        <taxon>Metazoa</taxon>
        <taxon>Ecdysozoa</taxon>
        <taxon>Nematoda</taxon>
        <taxon>Chromadorea</taxon>
        <taxon>Rhabditida</taxon>
        <taxon>Rhabditina</taxon>
        <taxon>Rhabditomorpha</taxon>
        <taxon>Rhabditoidea</taxon>
        <taxon>Rhabditidae</taxon>
        <taxon>Peloderinae</taxon>
        <taxon>Caenorhabditis</taxon>
    </lineage>
</organism>
<gene>
    <name evidence="8" type="primary">ari-1.1</name>
    <name evidence="8" type="ORF">C27A12.8</name>
</gene>
<dbReference type="EC" id="2.3.2.31" evidence="1"/>
<dbReference type="EMBL" id="BX284601">
    <property type="protein sequence ID" value="CCD61206.1"/>
    <property type="molecule type" value="Genomic_DNA"/>
</dbReference>
<dbReference type="PIR" id="H87793">
    <property type="entry name" value="H87793"/>
</dbReference>
<dbReference type="RefSeq" id="NP_491749.2">
    <property type="nucleotide sequence ID" value="NM_059348.5"/>
</dbReference>
<dbReference type="SMR" id="O01965"/>
<dbReference type="FunCoup" id="O01965">
    <property type="interactions" value="3406"/>
</dbReference>
<dbReference type="IntAct" id="O01965">
    <property type="interactions" value="1"/>
</dbReference>
<dbReference type="STRING" id="6239.C27A12.8.2"/>
<dbReference type="PaxDb" id="6239-C27A12.8.1"/>
<dbReference type="PeptideAtlas" id="O01965"/>
<dbReference type="EnsemblMetazoa" id="C27A12.8.1">
    <property type="protein sequence ID" value="C27A12.8.1"/>
    <property type="gene ID" value="WBGene00016158"/>
</dbReference>
<dbReference type="GeneID" id="172284"/>
<dbReference type="KEGG" id="cel:CELE_C27A12.8"/>
<dbReference type="UCSC" id="C27A12.8.1">
    <property type="organism name" value="c. elegans"/>
</dbReference>
<dbReference type="AGR" id="WB:WBGene00016158"/>
<dbReference type="CTD" id="172284"/>
<dbReference type="WormBase" id="C27A12.8">
    <property type="protein sequence ID" value="CE29680"/>
    <property type="gene ID" value="WBGene00016158"/>
    <property type="gene designation" value="ari-1.1"/>
</dbReference>
<dbReference type="eggNOG" id="KOG1815">
    <property type="taxonomic scope" value="Eukaryota"/>
</dbReference>
<dbReference type="GeneTree" id="ENSGT00940000155744"/>
<dbReference type="HOGENOM" id="CLU_009823_4_2_1"/>
<dbReference type="InParanoid" id="O01965"/>
<dbReference type="OMA" id="HRFCMIC"/>
<dbReference type="OrthoDB" id="10009520at2759"/>
<dbReference type="PhylomeDB" id="O01965"/>
<dbReference type="Reactome" id="R-CEL-1169408">
    <property type="pathway name" value="ISG15 antiviral mechanism"/>
</dbReference>
<dbReference type="Reactome" id="R-CEL-9833482">
    <property type="pathway name" value="PKR-mediated signaling"/>
</dbReference>
<dbReference type="Reactome" id="R-CEL-9909505">
    <property type="pathway name" value="Modulation of host responses by IFN-stimulated genes"/>
</dbReference>
<dbReference type="PRO" id="PR:O01965"/>
<dbReference type="Proteomes" id="UP000001940">
    <property type="component" value="Chromosome I"/>
</dbReference>
<dbReference type="Bgee" id="WBGene00016158">
    <property type="expression patterns" value="Expressed in adult organism and 4 other cell types or tissues"/>
</dbReference>
<dbReference type="GO" id="GO:0005737">
    <property type="term" value="C:cytoplasm"/>
    <property type="evidence" value="ECO:0000314"/>
    <property type="project" value="WormBase"/>
</dbReference>
<dbReference type="GO" id="GO:0005634">
    <property type="term" value="C:nucleus"/>
    <property type="evidence" value="ECO:0000314"/>
    <property type="project" value="WormBase"/>
</dbReference>
<dbReference type="GO" id="GO:0000151">
    <property type="term" value="C:ubiquitin ligase complex"/>
    <property type="evidence" value="ECO:0000318"/>
    <property type="project" value="GO_Central"/>
</dbReference>
<dbReference type="GO" id="GO:0031624">
    <property type="term" value="F:ubiquitin conjugating enzyme binding"/>
    <property type="evidence" value="ECO:0000318"/>
    <property type="project" value="GO_Central"/>
</dbReference>
<dbReference type="GO" id="GO:0061630">
    <property type="term" value="F:ubiquitin protein ligase activity"/>
    <property type="evidence" value="ECO:0000318"/>
    <property type="project" value="GO_Central"/>
</dbReference>
<dbReference type="GO" id="GO:0008270">
    <property type="term" value="F:zinc ion binding"/>
    <property type="evidence" value="ECO:0007669"/>
    <property type="project" value="UniProtKB-KW"/>
</dbReference>
<dbReference type="GO" id="GO:0016567">
    <property type="term" value="P:protein ubiquitination"/>
    <property type="evidence" value="ECO:0007669"/>
    <property type="project" value="InterPro"/>
</dbReference>
<dbReference type="GO" id="GO:0006511">
    <property type="term" value="P:ubiquitin-dependent protein catabolic process"/>
    <property type="evidence" value="ECO:0000318"/>
    <property type="project" value="GO_Central"/>
</dbReference>
<dbReference type="CDD" id="cd20343">
    <property type="entry name" value="BRcat_RBR_HHARI-like"/>
    <property type="match status" value="1"/>
</dbReference>
<dbReference type="CDD" id="cd20356">
    <property type="entry name" value="Rcat_RBR_HHARI-like"/>
    <property type="match status" value="1"/>
</dbReference>
<dbReference type="CDD" id="cd16773">
    <property type="entry name" value="RING-HC_RBR_TRIAD1"/>
    <property type="match status" value="1"/>
</dbReference>
<dbReference type="FunFam" id="1.20.120.1750:FF:000002">
    <property type="entry name" value="RBR-type E3 ubiquitin transferase"/>
    <property type="match status" value="1"/>
</dbReference>
<dbReference type="FunFam" id="3.30.40.10:FF:000019">
    <property type="entry name" value="RBR-type E3 ubiquitin transferase"/>
    <property type="match status" value="1"/>
</dbReference>
<dbReference type="Gene3D" id="1.20.120.1750">
    <property type="match status" value="1"/>
</dbReference>
<dbReference type="Gene3D" id="3.30.40.10">
    <property type="entry name" value="Zinc/RING finger domain, C3HC4 (zinc finger)"/>
    <property type="match status" value="1"/>
</dbReference>
<dbReference type="InterPro" id="IPR045840">
    <property type="entry name" value="Ariadne"/>
</dbReference>
<dbReference type="InterPro" id="IPR048962">
    <property type="entry name" value="ARIH1-like_UBL"/>
</dbReference>
<dbReference type="InterPro" id="IPR031127">
    <property type="entry name" value="E3_UB_ligase_RBR"/>
</dbReference>
<dbReference type="InterPro" id="IPR002867">
    <property type="entry name" value="IBR_dom"/>
</dbReference>
<dbReference type="InterPro" id="IPR044066">
    <property type="entry name" value="TRIAD_supradom"/>
</dbReference>
<dbReference type="InterPro" id="IPR013083">
    <property type="entry name" value="Znf_RING/FYVE/PHD"/>
</dbReference>
<dbReference type="PANTHER" id="PTHR11685">
    <property type="entry name" value="RBR FAMILY RING FINGER AND IBR DOMAIN-CONTAINING"/>
    <property type="match status" value="1"/>
</dbReference>
<dbReference type="Pfam" id="PF19422">
    <property type="entry name" value="Ariadne"/>
    <property type="match status" value="1"/>
</dbReference>
<dbReference type="Pfam" id="PF01485">
    <property type="entry name" value="IBR"/>
    <property type="match status" value="1"/>
</dbReference>
<dbReference type="Pfam" id="PF22191">
    <property type="entry name" value="IBR_1"/>
    <property type="match status" value="1"/>
</dbReference>
<dbReference type="Pfam" id="PF21235">
    <property type="entry name" value="UBA_ARI1"/>
    <property type="match status" value="1"/>
</dbReference>
<dbReference type="SMART" id="SM00647">
    <property type="entry name" value="IBR"/>
    <property type="match status" value="2"/>
</dbReference>
<dbReference type="SUPFAM" id="SSF57850">
    <property type="entry name" value="RING/U-box"/>
    <property type="match status" value="3"/>
</dbReference>
<dbReference type="PROSITE" id="PS51873">
    <property type="entry name" value="TRIAD"/>
    <property type="match status" value="1"/>
</dbReference>